<evidence type="ECO:0000255" key="1">
    <source>
        <dbReference type="HAMAP-Rule" id="MF_00033"/>
    </source>
</evidence>
<dbReference type="EC" id="2.4.1.227" evidence="1"/>
<dbReference type="EMBL" id="AE015928">
    <property type="protein sequence ID" value="AAO78554.1"/>
    <property type="molecule type" value="Genomic_DNA"/>
</dbReference>
<dbReference type="RefSeq" id="NP_812360.1">
    <property type="nucleotide sequence ID" value="NC_004663.1"/>
</dbReference>
<dbReference type="RefSeq" id="WP_011108837.1">
    <property type="nucleotide sequence ID" value="NC_004663.1"/>
</dbReference>
<dbReference type="SMR" id="Q8A258"/>
<dbReference type="FunCoup" id="Q8A258">
    <property type="interactions" value="275"/>
</dbReference>
<dbReference type="STRING" id="226186.BT_3448"/>
<dbReference type="CAZy" id="GT28">
    <property type="family name" value="Glycosyltransferase Family 28"/>
</dbReference>
<dbReference type="PaxDb" id="226186-BT_3448"/>
<dbReference type="EnsemblBacteria" id="AAO78554">
    <property type="protein sequence ID" value="AAO78554"/>
    <property type="gene ID" value="BT_3448"/>
</dbReference>
<dbReference type="GeneID" id="60924628"/>
<dbReference type="KEGG" id="bth:BT_3448"/>
<dbReference type="PATRIC" id="fig|226186.12.peg.3515"/>
<dbReference type="eggNOG" id="COG0707">
    <property type="taxonomic scope" value="Bacteria"/>
</dbReference>
<dbReference type="HOGENOM" id="CLU_037404_0_1_10"/>
<dbReference type="InParanoid" id="Q8A258"/>
<dbReference type="OrthoDB" id="9808936at2"/>
<dbReference type="UniPathway" id="UPA00219"/>
<dbReference type="Proteomes" id="UP000001414">
    <property type="component" value="Chromosome"/>
</dbReference>
<dbReference type="GO" id="GO:0005886">
    <property type="term" value="C:plasma membrane"/>
    <property type="evidence" value="ECO:0007669"/>
    <property type="project" value="UniProtKB-SubCell"/>
</dbReference>
<dbReference type="GO" id="GO:0016757">
    <property type="term" value="F:glycosyltransferase activity"/>
    <property type="evidence" value="ECO:0000318"/>
    <property type="project" value="GO_Central"/>
</dbReference>
<dbReference type="GO" id="GO:0051991">
    <property type="term" value="F:UDP-N-acetyl-D-glucosamine:N-acetylmuramoyl-L-alanyl-D-glutamyl-meso-2,6-diaminopimelyl-D-alanyl-D-alanine-diphosphoundecaprenol 4-beta-N-acetylglucosaminlytransferase activity"/>
    <property type="evidence" value="ECO:0007669"/>
    <property type="project" value="RHEA"/>
</dbReference>
<dbReference type="GO" id="GO:0050511">
    <property type="term" value="F:undecaprenyldiphospho-muramoylpentapeptide beta-N-acetylglucosaminyltransferase activity"/>
    <property type="evidence" value="ECO:0007669"/>
    <property type="project" value="UniProtKB-UniRule"/>
</dbReference>
<dbReference type="GO" id="GO:0005975">
    <property type="term" value="P:carbohydrate metabolic process"/>
    <property type="evidence" value="ECO:0007669"/>
    <property type="project" value="InterPro"/>
</dbReference>
<dbReference type="GO" id="GO:0051301">
    <property type="term" value="P:cell division"/>
    <property type="evidence" value="ECO:0007669"/>
    <property type="project" value="UniProtKB-KW"/>
</dbReference>
<dbReference type="GO" id="GO:0071555">
    <property type="term" value="P:cell wall organization"/>
    <property type="evidence" value="ECO:0007669"/>
    <property type="project" value="UniProtKB-KW"/>
</dbReference>
<dbReference type="GO" id="GO:0030259">
    <property type="term" value="P:lipid glycosylation"/>
    <property type="evidence" value="ECO:0007669"/>
    <property type="project" value="UniProtKB-UniRule"/>
</dbReference>
<dbReference type="GO" id="GO:0009252">
    <property type="term" value="P:peptidoglycan biosynthetic process"/>
    <property type="evidence" value="ECO:0007669"/>
    <property type="project" value="UniProtKB-UniRule"/>
</dbReference>
<dbReference type="GO" id="GO:0008360">
    <property type="term" value="P:regulation of cell shape"/>
    <property type="evidence" value="ECO:0007669"/>
    <property type="project" value="UniProtKB-KW"/>
</dbReference>
<dbReference type="CDD" id="cd03785">
    <property type="entry name" value="GT28_MurG"/>
    <property type="match status" value="1"/>
</dbReference>
<dbReference type="Gene3D" id="3.40.50.2000">
    <property type="entry name" value="Glycogen Phosphorylase B"/>
    <property type="match status" value="2"/>
</dbReference>
<dbReference type="HAMAP" id="MF_00033">
    <property type="entry name" value="MurG"/>
    <property type="match status" value="1"/>
</dbReference>
<dbReference type="InterPro" id="IPR006009">
    <property type="entry name" value="GlcNAc_MurG"/>
</dbReference>
<dbReference type="InterPro" id="IPR007235">
    <property type="entry name" value="Glyco_trans_28_C"/>
</dbReference>
<dbReference type="InterPro" id="IPR004276">
    <property type="entry name" value="GlycoTrans_28_N"/>
</dbReference>
<dbReference type="NCBIfam" id="TIGR01133">
    <property type="entry name" value="murG"/>
    <property type="match status" value="1"/>
</dbReference>
<dbReference type="PANTHER" id="PTHR21015:SF22">
    <property type="entry name" value="GLYCOSYLTRANSFERASE"/>
    <property type="match status" value="1"/>
</dbReference>
<dbReference type="PANTHER" id="PTHR21015">
    <property type="entry name" value="UDP-N-ACETYLGLUCOSAMINE--N-ACETYLMURAMYL-(PENTAPEPTIDE) PYROPHOSPHORYL-UNDECAPRENOL N-ACETYLGLUCOSAMINE TRANSFERASE 1"/>
    <property type="match status" value="1"/>
</dbReference>
<dbReference type="Pfam" id="PF04101">
    <property type="entry name" value="Glyco_tran_28_C"/>
    <property type="match status" value="1"/>
</dbReference>
<dbReference type="Pfam" id="PF03033">
    <property type="entry name" value="Glyco_transf_28"/>
    <property type="match status" value="1"/>
</dbReference>
<dbReference type="SUPFAM" id="SSF53756">
    <property type="entry name" value="UDP-Glycosyltransferase/glycogen phosphorylase"/>
    <property type="match status" value="1"/>
</dbReference>
<name>MURG_BACTN</name>
<gene>
    <name evidence="1" type="primary">murG</name>
    <name type="ordered locus">BT_3448</name>
</gene>
<sequence length="372" mass="40243">MEKELRIIISGGGTGGHIFPAVSIANAIIELRPDAKILFVGAEGRMEMQRVPDAGYKIIGLPIAGFDRKHLWKNVSVLIKLARSQWKARSIIKNFRPQVAVGVGGYASGPTLKTAGMMGVPTLIQEQNSYAGVTNKLLAQKAKAICVAYDGMEKFFPADKIIMTGNPVRQNLTKDMPEKGAALRSFNLQPDKKTILIVGGSLGARTINNTLTAALATIKENNDIQFIWQTGKYYYPQVTEAVRAAGELPNLYVTDFIKDMAAAYAASDLVISRAGAGSISEFCLLHKPVVLVPSPNVAEDHQTKNALALVDKQAAIYVKDSEAEAKLMDVALNTVADDRKLKELSENIAKLALPDSARIIAQEVIKLAEAEN</sequence>
<organism>
    <name type="scientific">Bacteroides thetaiotaomicron (strain ATCC 29148 / DSM 2079 / JCM 5827 / CCUG 10774 / NCTC 10582 / VPI-5482 / E50)</name>
    <dbReference type="NCBI Taxonomy" id="226186"/>
    <lineage>
        <taxon>Bacteria</taxon>
        <taxon>Pseudomonadati</taxon>
        <taxon>Bacteroidota</taxon>
        <taxon>Bacteroidia</taxon>
        <taxon>Bacteroidales</taxon>
        <taxon>Bacteroidaceae</taxon>
        <taxon>Bacteroides</taxon>
    </lineage>
</organism>
<keyword id="KW-0131">Cell cycle</keyword>
<keyword id="KW-0132">Cell division</keyword>
<keyword id="KW-0997">Cell inner membrane</keyword>
<keyword id="KW-1003">Cell membrane</keyword>
<keyword id="KW-0133">Cell shape</keyword>
<keyword id="KW-0961">Cell wall biogenesis/degradation</keyword>
<keyword id="KW-0328">Glycosyltransferase</keyword>
<keyword id="KW-0472">Membrane</keyword>
<keyword id="KW-0573">Peptidoglycan synthesis</keyword>
<keyword id="KW-1185">Reference proteome</keyword>
<keyword id="KW-0808">Transferase</keyword>
<feature type="chain" id="PRO_0000109144" description="UDP-N-acetylglucosamine--N-acetylmuramyl-(pentapeptide) pyrophosphoryl-undecaprenol N-acetylglucosamine transferase">
    <location>
        <begin position="1"/>
        <end position="372"/>
    </location>
</feature>
<feature type="binding site" evidence="1">
    <location>
        <begin position="14"/>
        <end position="16"/>
    </location>
    <ligand>
        <name>UDP-N-acetyl-alpha-D-glucosamine</name>
        <dbReference type="ChEBI" id="CHEBI:57705"/>
    </ligand>
</feature>
<feature type="binding site" evidence="1">
    <location>
        <position position="128"/>
    </location>
    <ligand>
        <name>UDP-N-acetyl-alpha-D-glucosamine</name>
        <dbReference type="ChEBI" id="CHEBI:57705"/>
    </ligand>
</feature>
<feature type="binding site" evidence="1">
    <location>
        <position position="169"/>
    </location>
    <ligand>
        <name>UDP-N-acetyl-alpha-D-glucosamine</name>
        <dbReference type="ChEBI" id="CHEBI:57705"/>
    </ligand>
</feature>
<feature type="binding site" evidence="1">
    <location>
        <position position="201"/>
    </location>
    <ligand>
        <name>UDP-N-acetyl-alpha-D-glucosamine</name>
        <dbReference type="ChEBI" id="CHEBI:57705"/>
    </ligand>
</feature>
<feature type="binding site" evidence="1">
    <location>
        <position position="257"/>
    </location>
    <ligand>
        <name>UDP-N-acetyl-alpha-D-glucosamine</name>
        <dbReference type="ChEBI" id="CHEBI:57705"/>
    </ligand>
</feature>
<feature type="binding site" evidence="1">
    <location>
        <position position="302"/>
    </location>
    <ligand>
        <name>UDP-N-acetyl-alpha-D-glucosamine</name>
        <dbReference type="ChEBI" id="CHEBI:57705"/>
    </ligand>
</feature>
<comment type="function">
    <text evidence="1">Cell wall formation. Catalyzes the transfer of a GlcNAc subunit on undecaprenyl-pyrophosphoryl-MurNAc-pentapeptide (lipid intermediate I) to form undecaprenyl-pyrophosphoryl-MurNAc-(pentapeptide)GlcNAc (lipid intermediate II).</text>
</comment>
<comment type="catalytic activity">
    <reaction evidence="1">
        <text>di-trans,octa-cis-undecaprenyl diphospho-N-acetyl-alpha-D-muramoyl-L-alanyl-D-glutamyl-meso-2,6-diaminopimeloyl-D-alanyl-D-alanine + UDP-N-acetyl-alpha-D-glucosamine = di-trans,octa-cis-undecaprenyl diphospho-[N-acetyl-alpha-D-glucosaminyl-(1-&gt;4)]-N-acetyl-alpha-D-muramoyl-L-alanyl-D-glutamyl-meso-2,6-diaminopimeloyl-D-alanyl-D-alanine + UDP + H(+)</text>
        <dbReference type="Rhea" id="RHEA:31227"/>
        <dbReference type="ChEBI" id="CHEBI:15378"/>
        <dbReference type="ChEBI" id="CHEBI:57705"/>
        <dbReference type="ChEBI" id="CHEBI:58223"/>
        <dbReference type="ChEBI" id="CHEBI:61387"/>
        <dbReference type="ChEBI" id="CHEBI:61388"/>
        <dbReference type="EC" id="2.4.1.227"/>
    </reaction>
</comment>
<comment type="pathway">
    <text evidence="1">Cell wall biogenesis; peptidoglycan biosynthesis.</text>
</comment>
<comment type="subcellular location">
    <subcellularLocation>
        <location evidence="1">Cell inner membrane</location>
        <topology evidence="1">Peripheral membrane protein</topology>
        <orientation evidence="1">Cytoplasmic side</orientation>
    </subcellularLocation>
</comment>
<comment type="similarity">
    <text evidence="1">Belongs to the glycosyltransferase 28 family. MurG subfamily.</text>
</comment>
<reference key="1">
    <citation type="journal article" date="2003" name="Science">
        <title>A genomic view of the human-Bacteroides thetaiotaomicron symbiosis.</title>
        <authorList>
            <person name="Xu J."/>
            <person name="Bjursell M.K."/>
            <person name="Himrod J."/>
            <person name="Deng S."/>
            <person name="Carmichael L.K."/>
            <person name="Chiang H.C."/>
            <person name="Hooper L.V."/>
            <person name="Gordon J.I."/>
        </authorList>
    </citation>
    <scope>NUCLEOTIDE SEQUENCE [LARGE SCALE GENOMIC DNA]</scope>
    <source>
        <strain>ATCC 29148 / DSM 2079 / JCM 5827 / CCUG 10774 / NCTC 10582 / VPI-5482 / E50</strain>
    </source>
</reference>
<proteinExistence type="inferred from homology"/>
<accession>Q8A258</accession>
<protein>
    <recommendedName>
        <fullName evidence="1">UDP-N-acetylglucosamine--N-acetylmuramyl-(pentapeptide) pyrophosphoryl-undecaprenol N-acetylglucosamine transferase</fullName>
        <ecNumber evidence="1">2.4.1.227</ecNumber>
    </recommendedName>
    <alternativeName>
        <fullName evidence="1">Undecaprenyl-PP-MurNAc-pentapeptide-UDPGlcNAc GlcNAc transferase</fullName>
    </alternativeName>
</protein>